<feature type="chain" id="PRO_1000011378" description="3-methyl-2-oxobutanoate hydroxymethyltransferase">
    <location>
        <begin position="1"/>
        <end position="277"/>
    </location>
</feature>
<feature type="active site" description="Proton acceptor" evidence="1">
    <location>
        <position position="186"/>
    </location>
</feature>
<feature type="binding site" evidence="1">
    <location>
        <begin position="49"/>
        <end position="50"/>
    </location>
    <ligand>
        <name>3-methyl-2-oxobutanoate</name>
        <dbReference type="ChEBI" id="CHEBI:11851"/>
    </ligand>
</feature>
<feature type="binding site" evidence="1">
    <location>
        <position position="49"/>
    </location>
    <ligand>
        <name>Mg(2+)</name>
        <dbReference type="ChEBI" id="CHEBI:18420"/>
    </ligand>
</feature>
<feature type="binding site" evidence="1">
    <location>
        <position position="88"/>
    </location>
    <ligand>
        <name>3-methyl-2-oxobutanoate</name>
        <dbReference type="ChEBI" id="CHEBI:11851"/>
    </ligand>
</feature>
<feature type="binding site" evidence="1">
    <location>
        <position position="88"/>
    </location>
    <ligand>
        <name>Mg(2+)</name>
        <dbReference type="ChEBI" id="CHEBI:18420"/>
    </ligand>
</feature>
<feature type="binding site" evidence="1">
    <location>
        <position position="118"/>
    </location>
    <ligand>
        <name>3-methyl-2-oxobutanoate</name>
        <dbReference type="ChEBI" id="CHEBI:11851"/>
    </ligand>
</feature>
<feature type="binding site" evidence="1">
    <location>
        <position position="120"/>
    </location>
    <ligand>
        <name>Mg(2+)</name>
        <dbReference type="ChEBI" id="CHEBI:18420"/>
    </ligand>
</feature>
<proteinExistence type="inferred from homology"/>
<organism>
    <name type="scientific">Cereibacter sphaeroides (strain ATCC 17025 / ATH 2.4.3)</name>
    <name type="common">Rhodobacter sphaeroides</name>
    <dbReference type="NCBI Taxonomy" id="349102"/>
    <lineage>
        <taxon>Bacteria</taxon>
        <taxon>Pseudomonadati</taxon>
        <taxon>Pseudomonadota</taxon>
        <taxon>Alphaproteobacteria</taxon>
        <taxon>Rhodobacterales</taxon>
        <taxon>Paracoccaceae</taxon>
        <taxon>Cereibacter</taxon>
    </lineage>
</organism>
<accession>A4WVH0</accession>
<keyword id="KW-0963">Cytoplasm</keyword>
<keyword id="KW-0460">Magnesium</keyword>
<keyword id="KW-0479">Metal-binding</keyword>
<keyword id="KW-0566">Pantothenate biosynthesis</keyword>
<keyword id="KW-0808">Transferase</keyword>
<comment type="function">
    <text evidence="1">Catalyzes the reversible reaction in which hydroxymethyl group from 5,10-methylenetetrahydrofolate is transferred onto alpha-ketoisovalerate to form ketopantoate.</text>
</comment>
<comment type="catalytic activity">
    <reaction evidence="1">
        <text>3-methyl-2-oxobutanoate + (6R)-5,10-methylene-5,6,7,8-tetrahydrofolate + H2O = 2-dehydropantoate + (6S)-5,6,7,8-tetrahydrofolate</text>
        <dbReference type="Rhea" id="RHEA:11824"/>
        <dbReference type="ChEBI" id="CHEBI:11561"/>
        <dbReference type="ChEBI" id="CHEBI:11851"/>
        <dbReference type="ChEBI" id="CHEBI:15377"/>
        <dbReference type="ChEBI" id="CHEBI:15636"/>
        <dbReference type="ChEBI" id="CHEBI:57453"/>
        <dbReference type="EC" id="2.1.2.11"/>
    </reaction>
</comment>
<comment type="cofactor">
    <cofactor evidence="1">
        <name>Mg(2+)</name>
        <dbReference type="ChEBI" id="CHEBI:18420"/>
    </cofactor>
    <text evidence="1">Binds 1 Mg(2+) ion per subunit.</text>
</comment>
<comment type="pathway">
    <text evidence="1">Cofactor biosynthesis; (R)-pantothenate biosynthesis; (R)-pantoate from 3-methyl-2-oxobutanoate: step 1/2.</text>
</comment>
<comment type="subunit">
    <text evidence="1">Homodecamer; pentamer of dimers.</text>
</comment>
<comment type="subcellular location">
    <subcellularLocation>
        <location evidence="1">Cytoplasm</location>
    </subcellularLocation>
</comment>
<comment type="similarity">
    <text evidence="1">Belongs to the PanB family.</text>
</comment>
<sequence length="277" mass="29341">MSVNSPVRPVMAADILARKGGEPLVCLTAYTTPMARLVDAHCDITLVGDSLGMVVHGLPTTLGVTMEMMILHGKAVARGTSRAMLVIDMPFGSYEESPAQAFANARRLMAETGCAAVKLEGGRHMAGTIRFLVERGIPVMAHVGLTPQAVNALGGYKVQGRGADADRVMEDAIAVAEAGAFSVVLEKVPDGLSQRITQRVAIPTIGIGASAHCDGQVLVLDDMLGLFTDFRPKFVKRYGELGTAADEAIAAYAAEVRARRFPASEHVFPDELKGKQP</sequence>
<dbReference type="EC" id="2.1.2.11" evidence="1"/>
<dbReference type="EMBL" id="CP000661">
    <property type="protein sequence ID" value="ABP71384.1"/>
    <property type="molecule type" value="Genomic_DNA"/>
</dbReference>
<dbReference type="SMR" id="A4WVH0"/>
<dbReference type="STRING" id="349102.Rsph17025_2496"/>
<dbReference type="KEGG" id="rsq:Rsph17025_2496"/>
<dbReference type="eggNOG" id="COG0413">
    <property type="taxonomic scope" value="Bacteria"/>
</dbReference>
<dbReference type="HOGENOM" id="CLU_036645_1_0_5"/>
<dbReference type="BioCyc" id="RSPH349102:G1G8M-2574-MONOMER"/>
<dbReference type="UniPathway" id="UPA00028">
    <property type="reaction ID" value="UER00003"/>
</dbReference>
<dbReference type="GO" id="GO:0005737">
    <property type="term" value="C:cytoplasm"/>
    <property type="evidence" value="ECO:0007669"/>
    <property type="project" value="UniProtKB-SubCell"/>
</dbReference>
<dbReference type="GO" id="GO:0003864">
    <property type="term" value="F:3-methyl-2-oxobutanoate hydroxymethyltransferase activity"/>
    <property type="evidence" value="ECO:0007669"/>
    <property type="project" value="UniProtKB-UniRule"/>
</dbReference>
<dbReference type="GO" id="GO:0000287">
    <property type="term" value="F:magnesium ion binding"/>
    <property type="evidence" value="ECO:0007669"/>
    <property type="project" value="TreeGrafter"/>
</dbReference>
<dbReference type="GO" id="GO:0015940">
    <property type="term" value="P:pantothenate biosynthetic process"/>
    <property type="evidence" value="ECO:0007669"/>
    <property type="project" value="UniProtKB-UniRule"/>
</dbReference>
<dbReference type="CDD" id="cd06557">
    <property type="entry name" value="KPHMT-like"/>
    <property type="match status" value="1"/>
</dbReference>
<dbReference type="FunFam" id="3.20.20.60:FF:000003">
    <property type="entry name" value="3-methyl-2-oxobutanoate hydroxymethyltransferase"/>
    <property type="match status" value="1"/>
</dbReference>
<dbReference type="Gene3D" id="3.20.20.60">
    <property type="entry name" value="Phosphoenolpyruvate-binding domains"/>
    <property type="match status" value="1"/>
</dbReference>
<dbReference type="HAMAP" id="MF_00156">
    <property type="entry name" value="PanB"/>
    <property type="match status" value="1"/>
</dbReference>
<dbReference type="InterPro" id="IPR003700">
    <property type="entry name" value="Pantoate_hydroxy_MeTrfase"/>
</dbReference>
<dbReference type="InterPro" id="IPR015813">
    <property type="entry name" value="Pyrv/PenolPyrv_kinase-like_dom"/>
</dbReference>
<dbReference type="InterPro" id="IPR040442">
    <property type="entry name" value="Pyrv_kinase-like_dom_sf"/>
</dbReference>
<dbReference type="NCBIfam" id="TIGR00222">
    <property type="entry name" value="panB"/>
    <property type="match status" value="1"/>
</dbReference>
<dbReference type="NCBIfam" id="NF001452">
    <property type="entry name" value="PRK00311.1"/>
    <property type="match status" value="1"/>
</dbReference>
<dbReference type="PANTHER" id="PTHR20881">
    <property type="entry name" value="3-METHYL-2-OXOBUTANOATE HYDROXYMETHYLTRANSFERASE"/>
    <property type="match status" value="1"/>
</dbReference>
<dbReference type="PANTHER" id="PTHR20881:SF0">
    <property type="entry name" value="3-METHYL-2-OXOBUTANOATE HYDROXYMETHYLTRANSFERASE"/>
    <property type="match status" value="1"/>
</dbReference>
<dbReference type="Pfam" id="PF02548">
    <property type="entry name" value="Pantoate_transf"/>
    <property type="match status" value="1"/>
</dbReference>
<dbReference type="PIRSF" id="PIRSF000388">
    <property type="entry name" value="Pantoate_hydroxy_MeTrfase"/>
    <property type="match status" value="1"/>
</dbReference>
<dbReference type="SUPFAM" id="SSF51621">
    <property type="entry name" value="Phosphoenolpyruvate/pyruvate domain"/>
    <property type="match status" value="1"/>
</dbReference>
<evidence type="ECO:0000255" key="1">
    <source>
        <dbReference type="HAMAP-Rule" id="MF_00156"/>
    </source>
</evidence>
<protein>
    <recommendedName>
        <fullName evidence="1">3-methyl-2-oxobutanoate hydroxymethyltransferase</fullName>
        <ecNumber evidence="1">2.1.2.11</ecNumber>
    </recommendedName>
    <alternativeName>
        <fullName evidence="1">Ketopantoate hydroxymethyltransferase</fullName>
        <shortName evidence="1">KPHMT</shortName>
    </alternativeName>
</protein>
<gene>
    <name evidence="1" type="primary">panB</name>
    <name type="ordered locus">Rsph17025_2496</name>
</gene>
<name>PANB_CERS5</name>
<reference key="1">
    <citation type="submission" date="2007-04" db="EMBL/GenBank/DDBJ databases">
        <title>Complete sequence of chromosome of Rhodobacter sphaeroides ATCC 17025.</title>
        <authorList>
            <consortium name="US DOE Joint Genome Institute"/>
            <person name="Copeland A."/>
            <person name="Lucas S."/>
            <person name="Lapidus A."/>
            <person name="Barry K."/>
            <person name="Detter J.C."/>
            <person name="Glavina del Rio T."/>
            <person name="Hammon N."/>
            <person name="Israni S."/>
            <person name="Dalin E."/>
            <person name="Tice H."/>
            <person name="Pitluck S."/>
            <person name="Chertkov O."/>
            <person name="Brettin T."/>
            <person name="Bruce D."/>
            <person name="Han C."/>
            <person name="Schmutz J."/>
            <person name="Larimer F."/>
            <person name="Land M."/>
            <person name="Hauser L."/>
            <person name="Kyrpides N."/>
            <person name="Kim E."/>
            <person name="Richardson P."/>
            <person name="Mackenzie C."/>
            <person name="Choudhary M."/>
            <person name="Donohue T.J."/>
            <person name="Kaplan S."/>
        </authorList>
    </citation>
    <scope>NUCLEOTIDE SEQUENCE [LARGE SCALE GENOMIC DNA]</scope>
    <source>
        <strain>ATCC 17025 / ATH 2.4.3</strain>
    </source>
</reference>